<protein>
    <recommendedName>
        <fullName>Fructose-bisphosphate aldolase class 2</fullName>
        <shortName>FBP aldolase</shortName>
        <shortName>FBPA</shortName>
        <ecNumber>4.1.2.13</ecNumber>
    </recommendedName>
    <alternativeName>
        <fullName>Fructose-1,6-bisphosphate aldolase</fullName>
    </alternativeName>
    <alternativeName>
        <fullName>Fructose-bisphosphate aldolase class II</fullName>
    </alternativeName>
</protein>
<evidence type="ECO:0000250" key="1"/>
<evidence type="ECO:0000305" key="2"/>
<gene>
    <name type="primary">fbaA</name>
    <name type="synonym">fba</name>
    <name type="ordered locus">BU451</name>
</gene>
<feature type="chain" id="PRO_0000178708" description="Fructose-bisphosphate aldolase class 2">
    <location>
        <begin position="1"/>
        <end position="358"/>
    </location>
</feature>
<feature type="active site" description="Proton donor" evidence="1">
    <location>
        <position position="109"/>
    </location>
</feature>
<feature type="binding site" evidence="1">
    <location>
        <position position="61"/>
    </location>
    <ligand>
        <name>D-glyceraldehyde 3-phosphate</name>
        <dbReference type="ChEBI" id="CHEBI:59776"/>
    </ligand>
</feature>
<feature type="binding site" evidence="1">
    <location>
        <position position="110"/>
    </location>
    <ligand>
        <name>Zn(2+)</name>
        <dbReference type="ChEBI" id="CHEBI:29105"/>
        <label>1</label>
        <note>catalytic</note>
    </ligand>
</feature>
<feature type="binding site" evidence="1">
    <location>
        <position position="144"/>
    </location>
    <ligand>
        <name>Zn(2+)</name>
        <dbReference type="ChEBI" id="CHEBI:29105"/>
        <label>2</label>
    </ligand>
</feature>
<feature type="binding site" evidence="1">
    <location>
        <position position="174"/>
    </location>
    <ligand>
        <name>Zn(2+)</name>
        <dbReference type="ChEBI" id="CHEBI:29105"/>
        <label>2</label>
    </ligand>
</feature>
<feature type="binding site" evidence="1">
    <location>
        <position position="226"/>
    </location>
    <ligand>
        <name>Zn(2+)</name>
        <dbReference type="ChEBI" id="CHEBI:29105"/>
        <label>1</label>
        <note>catalytic</note>
    </ligand>
</feature>
<feature type="binding site" evidence="1">
    <location>
        <position position="227"/>
    </location>
    <ligand>
        <name>dihydroxyacetone phosphate</name>
        <dbReference type="ChEBI" id="CHEBI:57642"/>
    </ligand>
</feature>
<feature type="binding site" evidence="1">
    <location>
        <position position="264"/>
    </location>
    <ligand>
        <name>Zn(2+)</name>
        <dbReference type="ChEBI" id="CHEBI:29105"/>
        <label>1</label>
        <note>catalytic</note>
    </ligand>
</feature>
<feature type="binding site" evidence="1">
    <location>
        <begin position="265"/>
        <end position="267"/>
    </location>
    <ligand>
        <name>dihydroxyacetone phosphate</name>
        <dbReference type="ChEBI" id="CHEBI:57642"/>
    </ligand>
</feature>
<feature type="binding site" evidence="1">
    <location>
        <begin position="286"/>
        <end position="289"/>
    </location>
    <ligand>
        <name>dihydroxyacetone phosphate</name>
        <dbReference type="ChEBI" id="CHEBI:57642"/>
    </ligand>
</feature>
<organism>
    <name type="scientific">Buchnera aphidicola subsp. Acyrthosiphon pisum (strain APS)</name>
    <name type="common">Acyrthosiphon pisum symbiotic bacterium</name>
    <dbReference type="NCBI Taxonomy" id="107806"/>
    <lineage>
        <taxon>Bacteria</taxon>
        <taxon>Pseudomonadati</taxon>
        <taxon>Pseudomonadota</taxon>
        <taxon>Gammaproteobacteria</taxon>
        <taxon>Enterobacterales</taxon>
        <taxon>Erwiniaceae</taxon>
        <taxon>Buchnera</taxon>
    </lineage>
</organism>
<name>ALF_BUCAI</name>
<proteinExistence type="inferred from homology"/>
<reference key="1">
    <citation type="journal article" date="2000" name="Nature">
        <title>Genome sequence of the endocellular bacterial symbiont of aphids Buchnera sp. APS.</title>
        <authorList>
            <person name="Shigenobu S."/>
            <person name="Watanabe H."/>
            <person name="Hattori M."/>
            <person name="Sakaki Y."/>
            <person name="Ishikawa H."/>
        </authorList>
    </citation>
    <scope>NUCLEOTIDE SEQUENCE [LARGE SCALE GENOMIC DNA]</scope>
    <source>
        <strain>APS</strain>
    </source>
</reference>
<dbReference type="EC" id="4.1.2.13"/>
<dbReference type="EMBL" id="BA000003">
    <property type="protein sequence ID" value="BAB13149.1"/>
    <property type="molecule type" value="Genomic_DNA"/>
</dbReference>
<dbReference type="RefSeq" id="NP_240263.1">
    <property type="nucleotide sequence ID" value="NC_002528.1"/>
</dbReference>
<dbReference type="RefSeq" id="WP_009874405.1">
    <property type="nucleotide sequence ID" value="NZ_AP036055.1"/>
</dbReference>
<dbReference type="SMR" id="P57526"/>
<dbReference type="STRING" id="563178.BUAP5A_444"/>
<dbReference type="EnsemblBacteria" id="BAB13149">
    <property type="protein sequence ID" value="BAB13149"/>
    <property type="gene ID" value="BAB13149"/>
</dbReference>
<dbReference type="KEGG" id="buc:BU451"/>
<dbReference type="PATRIC" id="fig|107806.10.peg.461"/>
<dbReference type="eggNOG" id="COG0191">
    <property type="taxonomic scope" value="Bacteria"/>
</dbReference>
<dbReference type="HOGENOM" id="CLU_036923_0_0_6"/>
<dbReference type="UniPathway" id="UPA00109">
    <property type="reaction ID" value="UER00183"/>
</dbReference>
<dbReference type="Proteomes" id="UP000001806">
    <property type="component" value="Chromosome"/>
</dbReference>
<dbReference type="GO" id="GO:0005829">
    <property type="term" value="C:cytosol"/>
    <property type="evidence" value="ECO:0007669"/>
    <property type="project" value="TreeGrafter"/>
</dbReference>
<dbReference type="GO" id="GO:0004332">
    <property type="term" value="F:fructose-bisphosphate aldolase activity"/>
    <property type="evidence" value="ECO:0007669"/>
    <property type="project" value="UniProtKB-EC"/>
</dbReference>
<dbReference type="GO" id="GO:0008270">
    <property type="term" value="F:zinc ion binding"/>
    <property type="evidence" value="ECO:0007669"/>
    <property type="project" value="InterPro"/>
</dbReference>
<dbReference type="GO" id="GO:0006094">
    <property type="term" value="P:gluconeogenesis"/>
    <property type="evidence" value="ECO:0007669"/>
    <property type="project" value="TreeGrafter"/>
</dbReference>
<dbReference type="GO" id="GO:0006096">
    <property type="term" value="P:glycolytic process"/>
    <property type="evidence" value="ECO:0007669"/>
    <property type="project" value="UniProtKB-UniPathway"/>
</dbReference>
<dbReference type="CDD" id="cd00946">
    <property type="entry name" value="FBP_aldolase_IIA"/>
    <property type="match status" value="1"/>
</dbReference>
<dbReference type="FunFam" id="3.20.20.70:FF:000013">
    <property type="entry name" value="Class II fructose-bisphosphate aldolase"/>
    <property type="match status" value="1"/>
</dbReference>
<dbReference type="Gene3D" id="3.20.20.70">
    <property type="entry name" value="Aldolase class I"/>
    <property type="match status" value="1"/>
</dbReference>
<dbReference type="InterPro" id="IPR013785">
    <property type="entry name" value="Aldolase_TIM"/>
</dbReference>
<dbReference type="InterPro" id="IPR000771">
    <property type="entry name" value="FBA_II"/>
</dbReference>
<dbReference type="InterPro" id="IPR006411">
    <property type="entry name" value="Fruct_bisP_bact"/>
</dbReference>
<dbReference type="NCBIfam" id="TIGR00167">
    <property type="entry name" value="cbbA"/>
    <property type="match status" value="1"/>
</dbReference>
<dbReference type="NCBIfam" id="TIGR01520">
    <property type="entry name" value="FruBisAldo_II_A"/>
    <property type="match status" value="1"/>
</dbReference>
<dbReference type="NCBIfam" id="NF006628">
    <property type="entry name" value="PRK09197.1"/>
    <property type="match status" value="1"/>
</dbReference>
<dbReference type="PANTHER" id="PTHR30559:SF0">
    <property type="entry name" value="FRUCTOSE-BISPHOSPHATE ALDOLASE"/>
    <property type="match status" value="1"/>
</dbReference>
<dbReference type="PANTHER" id="PTHR30559">
    <property type="entry name" value="FRUCTOSE-BISPHOSPHATE ALDOLASE CLASS 2"/>
    <property type="match status" value="1"/>
</dbReference>
<dbReference type="Pfam" id="PF01116">
    <property type="entry name" value="F_bP_aldolase"/>
    <property type="match status" value="1"/>
</dbReference>
<dbReference type="PIRSF" id="PIRSF001359">
    <property type="entry name" value="F_bP_aldolase_II"/>
    <property type="match status" value="1"/>
</dbReference>
<dbReference type="SUPFAM" id="SSF51569">
    <property type="entry name" value="Aldolase"/>
    <property type="match status" value="1"/>
</dbReference>
<dbReference type="PROSITE" id="PS00602">
    <property type="entry name" value="ALDOLASE_CLASS_II_1"/>
    <property type="match status" value="1"/>
</dbReference>
<dbReference type="PROSITE" id="PS00806">
    <property type="entry name" value="ALDOLASE_CLASS_II_2"/>
    <property type="match status" value="1"/>
</dbReference>
<accession>P57526</accession>
<keyword id="KW-0324">Glycolysis</keyword>
<keyword id="KW-0456">Lyase</keyword>
<keyword id="KW-0479">Metal-binding</keyword>
<keyword id="KW-1185">Reference proteome</keyword>
<keyword id="KW-0862">Zinc</keyword>
<sequence>MNILNVIRPGVMNGDEARIVFELAKKKQFAIPAVNCIGTDSINAVLETAARVKSPIIIQFSHGGASFIAGYKKKLSENQEQAIQGAVSGAQHVHLMAKHYEIPVILHTDHCPKETLSWIDGLLEVGQNYYFNNNRPLFTSHMIDLSKESLEENISTCKKYFKRIKNINMMLEIELGCTGGEEDGIDNTKIDKKLLYTQPQDVNYAYEELNTISKNFSIAASFGNIHGVYQPGNIDLRPIILKNSQEFVSSKHNLEKNPLNLVFHGGSGSNLKEIKESIQYGVVKMNIDTDIQWAAWKGVLDFYKQNKEFLQHQLGNTTNKHKPNKKYYDPRTWIRKSQESISIRLEQSFKELNSFNIL</sequence>
<comment type="function">
    <text evidence="1">Catalyzes the aldol condensation of dihydroxyacetone phosphate (DHAP or glycerone-phosphate) with glyceraldehyde 3-phosphate (G3P) to form fructose 1,6-bisphosphate (FBP) in gluconeogenesis and the reverse reaction in glycolysis.</text>
</comment>
<comment type="catalytic activity">
    <reaction>
        <text>beta-D-fructose 1,6-bisphosphate = D-glyceraldehyde 3-phosphate + dihydroxyacetone phosphate</text>
        <dbReference type="Rhea" id="RHEA:14729"/>
        <dbReference type="ChEBI" id="CHEBI:32966"/>
        <dbReference type="ChEBI" id="CHEBI:57642"/>
        <dbReference type="ChEBI" id="CHEBI:59776"/>
        <dbReference type="EC" id="4.1.2.13"/>
    </reaction>
</comment>
<comment type="cofactor">
    <cofactor evidence="1">
        <name>Zn(2+)</name>
        <dbReference type="ChEBI" id="CHEBI:29105"/>
    </cofactor>
    <text evidence="1">Binds 2 Zn(2+) ions per subunit. One is catalytic and the other provides a structural contribution.</text>
</comment>
<comment type="pathway">
    <text>Carbohydrate degradation; glycolysis; D-glyceraldehyde 3-phosphate and glycerone phosphate from D-glucose: step 4/4.</text>
</comment>
<comment type="similarity">
    <text evidence="2">Belongs to the class II fructose-bisphosphate aldolase family.</text>
</comment>